<gene>
    <name type="primary">CYM</name>
</gene>
<comment type="function">
    <text>Chymosin is synthesized in the mucosa of the stomach. The enzyme hydrolyzes casein to paracasein.</text>
</comment>
<comment type="catalytic activity">
    <reaction>
        <text>Broad specificity similar to that of pepsin A. Clots milk by cleavage of a single 104-Ser-Phe-|-Met-Ala-107 bond in kappa-chain of casein.</text>
        <dbReference type="EC" id="3.4.23.4"/>
    </reaction>
</comment>
<comment type="subunit">
    <text>Monomer.</text>
</comment>
<comment type="similarity">
    <text evidence="2">Belongs to the peptidase A1 family.</text>
</comment>
<dbReference type="EC" id="3.4.23.4"/>
<dbReference type="PIR" id="A20146">
    <property type="entry name" value="A20146"/>
</dbReference>
<dbReference type="MEROPS" id="A01.041"/>
<dbReference type="InParanoid" id="P09873"/>
<dbReference type="Proteomes" id="UP000011712">
    <property type="component" value="Unplaced"/>
</dbReference>
<dbReference type="GO" id="GO:0004190">
    <property type="term" value="F:aspartic-type endopeptidase activity"/>
    <property type="evidence" value="ECO:0007669"/>
    <property type="project" value="UniProtKB-KW"/>
</dbReference>
<dbReference type="GO" id="GO:0007586">
    <property type="term" value="P:digestion"/>
    <property type="evidence" value="ECO:0007669"/>
    <property type="project" value="UniProtKB-KW"/>
</dbReference>
<dbReference type="GO" id="GO:0006508">
    <property type="term" value="P:proteolysis"/>
    <property type="evidence" value="ECO:0007669"/>
    <property type="project" value="UniProtKB-KW"/>
</dbReference>
<dbReference type="Gene3D" id="6.10.140.60">
    <property type="match status" value="1"/>
</dbReference>
<dbReference type="InterPro" id="IPR012848">
    <property type="entry name" value="Aspartic_peptidase_N"/>
</dbReference>
<dbReference type="InterPro" id="IPR021109">
    <property type="entry name" value="Peptidase_aspartic_dom_sf"/>
</dbReference>
<dbReference type="Pfam" id="PF07966">
    <property type="entry name" value="A1_Propeptide"/>
    <property type="match status" value="1"/>
</dbReference>
<dbReference type="SUPFAM" id="SSF50630">
    <property type="entry name" value="Acid proteases"/>
    <property type="match status" value="1"/>
</dbReference>
<proteinExistence type="evidence at protein level"/>
<feature type="propeptide" id="PRO_0000025992" description="Activation peptide">
    <location>
        <begin position="1"/>
        <end position="27"/>
    </location>
</feature>
<feature type="chain" id="PRO_0000025993" description="Chymosin" evidence="1">
    <location>
        <begin position="28"/>
        <end position="54" status="greater than"/>
    </location>
</feature>
<feature type="non-terminal residue">
    <location>
        <position position="54"/>
    </location>
</feature>
<reference key="1">
    <citation type="journal article" date="1982" name="Biochim. Biophys. Acta">
        <title>Isolation and partial characterization of prochymosin and chymosin from cat.</title>
        <authorList>
            <person name="Jensen T."/>
            <person name="Axelsen N.H."/>
            <person name="Foltmann B."/>
        </authorList>
    </citation>
    <scope>PROTEIN SEQUENCE</scope>
</reference>
<keyword id="KW-0064">Aspartyl protease</keyword>
<keyword id="KW-0222">Digestion</keyword>
<keyword id="KW-0903">Direct protein sequencing</keyword>
<keyword id="KW-0378">Hydrolase</keyword>
<keyword id="KW-0645">Protease</keyword>
<keyword id="KW-1185">Reference proteome</keyword>
<keyword id="KW-0865">Zymogen</keyword>
<organism>
    <name type="scientific">Felis catus</name>
    <name type="common">Cat</name>
    <name type="synonym">Felis silvestris catus</name>
    <dbReference type="NCBI Taxonomy" id="9685"/>
    <lineage>
        <taxon>Eukaryota</taxon>
        <taxon>Metazoa</taxon>
        <taxon>Chordata</taxon>
        <taxon>Craniata</taxon>
        <taxon>Vertebrata</taxon>
        <taxon>Euteleostomi</taxon>
        <taxon>Mammalia</taxon>
        <taxon>Eutheria</taxon>
        <taxon>Laurasiatheria</taxon>
        <taxon>Carnivora</taxon>
        <taxon>Feliformia</taxon>
        <taxon>Felidae</taxon>
        <taxon>Felinae</taxon>
        <taxon>Felis</taxon>
    </lineage>
</organism>
<protein>
    <recommendedName>
        <fullName>Chymosin</fullName>
        <ecNumber>3.4.23.4</ecNumber>
    </recommendedName>
</protein>
<name>CHYM_FELCA</name>
<sequence length="54" mass="6129">SEITRVPLHKGKSLRKALKEHGLLEBFDKVSNEPLADFLDSEYFGKIYIGTPPZ</sequence>
<evidence type="ECO:0000269" key="1">
    <source>
    </source>
</evidence>
<evidence type="ECO:0000305" key="2"/>
<accession>P09873</accession>